<reference key="1">
    <citation type="journal article" date="2006" name="PLoS Genet.">
        <title>Comparative genomics of emerging human ehrlichiosis agents.</title>
        <authorList>
            <person name="Dunning Hotopp J.C."/>
            <person name="Lin M."/>
            <person name="Madupu R."/>
            <person name="Crabtree J."/>
            <person name="Angiuoli S.V."/>
            <person name="Eisen J.A."/>
            <person name="Seshadri R."/>
            <person name="Ren Q."/>
            <person name="Wu M."/>
            <person name="Utterback T.R."/>
            <person name="Smith S."/>
            <person name="Lewis M."/>
            <person name="Khouri H."/>
            <person name="Zhang C."/>
            <person name="Niu H."/>
            <person name="Lin Q."/>
            <person name="Ohashi N."/>
            <person name="Zhi N."/>
            <person name="Nelson W.C."/>
            <person name="Brinkac L.M."/>
            <person name="Dodson R.J."/>
            <person name="Rosovitz M.J."/>
            <person name="Sundaram J.P."/>
            <person name="Daugherty S.C."/>
            <person name="Davidsen T."/>
            <person name="Durkin A.S."/>
            <person name="Gwinn M.L."/>
            <person name="Haft D.H."/>
            <person name="Selengut J.D."/>
            <person name="Sullivan S.A."/>
            <person name="Zafar N."/>
            <person name="Zhou L."/>
            <person name="Benahmed F."/>
            <person name="Forberger H."/>
            <person name="Halpin R."/>
            <person name="Mulligan S."/>
            <person name="Robinson J."/>
            <person name="White O."/>
            <person name="Rikihisa Y."/>
            <person name="Tettelin H."/>
        </authorList>
    </citation>
    <scope>NUCLEOTIDE SEQUENCE [LARGE SCALE GENOMIC DNA]</scope>
    <source>
        <strain>ATCC CRL-10679 / Arkansas</strain>
    </source>
</reference>
<sequence>MKCPFCNSTDTQVKDSRSIENDMLIRRRRVCLVCHSRFTTTEKLLLRSFMVVKKNGETELFNKQKLLSSILIATKKRPVSHEGINMMVNNIFYELEGKKENAIPTNVIGKMVMDNLFKLDKVAYVRFASVYMNFRNINDFSNIIAKIISEKTP</sequence>
<keyword id="KW-0067">ATP-binding</keyword>
<keyword id="KW-0238">DNA-binding</keyword>
<keyword id="KW-0479">Metal-binding</keyword>
<keyword id="KW-0547">Nucleotide-binding</keyword>
<keyword id="KW-1185">Reference proteome</keyword>
<keyword id="KW-0678">Repressor</keyword>
<keyword id="KW-0804">Transcription</keyword>
<keyword id="KW-0805">Transcription regulation</keyword>
<keyword id="KW-0862">Zinc</keyword>
<keyword id="KW-0863">Zinc-finger</keyword>
<feature type="chain" id="PRO_0000264174" description="Transcriptional repressor NrdR">
    <location>
        <begin position="1"/>
        <end position="153"/>
    </location>
</feature>
<feature type="domain" description="ATP-cone" evidence="1">
    <location>
        <begin position="49"/>
        <end position="139"/>
    </location>
</feature>
<feature type="zinc finger region" evidence="1">
    <location>
        <begin position="3"/>
        <end position="34"/>
    </location>
</feature>
<accession>Q2GHS3</accession>
<comment type="function">
    <text evidence="1">Negatively regulates transcription of bacterial ribonucleotide reductase nrd genes and operons by binding to NrdR-boxes.</text>
</comment>
<comment type="cofactor">
    <cofactor evidence="1">
        <name>Zn(2+)</name>
        <dbReference type="ChEBI" id="CHEBI:29105"/>
    </cofactor>
    <text evidence="1">Binds 1 zinc ion.</text>
</comment>
<comment type="similarity">
    <text evidence="1">Belongs to the NrdR family.</text>
</comment>
<gene>
    <name evidence="1" type="primary">nrdR</name>
    <name type="ordered locus">ECH_0185</name>
</gene>
<proteinExistence type="inferred from homology"/>
<name>NRDR_EHRCR</name>
<organism>
    <name type="scientific">Ehrlichia chaffeensis (strain ATCC CRL-10679 / Arkansas)</name>
    <dbReference type="NCBI Taxonomy" id="205920"/>
    <lineage>
        <taxon>Bacteria</taxon>
        <taxon>Pseudomonadati</taxon>
        <taxon>Pseudomonadota</taxon>
        <taxon>Alphaproteobacteria</taxon>
        <taxon>Rickettsiales</taxon>
        <taxon>Anaplasmataceae</taxon>
        <taxon>Ehrlichia</taxon>
    </lineage>
</organism>
<evidence type="ECO:0000255" key="1">
    <source>
        <dbReference type="HAMAP-Rule" id="MF_00440"/>
    </source>
</evidence>
<protein>
    <recommendedName>
        <fullName evidence="1">Transcriptional repressor NrdR</fullName>
    </recommendedName>
</protein>
<dbReference type="EMBL" id="CP000236">
    <property type="protein sequence ID" value="ABD44793.1"/>
    <property type="molecule type" value="Genomic_DNA"/>
</dbReference>
<dbReference type="RefSeq" id="WP_006010521.1">
    <property type="nucleotide sequence ID" value="NC_007799.1"/>
</dbReference>
<dbReference type="SMR" id="Q2GHS3"/>
<dbReference type="STRING" id="205920.ECH_0185"/>
<dbReference type="KEGG" id="ech:ECH_0185"/>
<dbReference type="eggNOG" id="COG1327">
    <property type="taxonomic scope" value="Bacteria"/>
</dbReference>
<dbReference type="HOGENOM" id="CLU_108412_0_1_5"/>
<dbReference type="OrthoDB" id="9807461at2"/>
<dbReference type="Proteomes" id="UP000008320">
    <property type="component" value="Chromosome"/>
</dbReference>
<dbReference type="GO" id="GO:0005524">
    <property type="term" value="F:ATP binding"/>
    <property type="evidence" value="ECO:0007669"/>
    <property type="project" value="UniProtKB-KW"/>
</dbReference>
<dbReference type="GO" id="GO:0003677">
    <property type="term" value="F:DNA binding"/>
    <property type="evidence" value="ECO:0007669"/>
    <property type="project" value="UniProtKB-KW"/>
</dbReference>
<dbReference type="GO" id="GO:0008270">
    <property type="term" value="F:zinc ion binding"/>
    <property type="evidence" value="ECO:0007669"/>
    <property type="project" value="UniProtKB-UniRule"/>
</dbReference>
<dbReference type="GO" id="GO:0045892">
    <property type="term" value="P:negative regulation of DNA-templated transcription"/>
    <property type="evidence" value="ECO:0007669"/>
    <property type="project" value="UniProtKB-UniRule"/>
</dbReference>
<dbReference type="HAMAP" id="MF_00440">
    <property type="entry name" value="NrdR"/>
    <property type="match status" value="1"/>
</dbReference>
<dbReference type="InterPro" id="IPR005144">
    <property type="entry name" value="ATP-cone_dom"/>
</dbReference>
<dbReference type="InterPro" id="IPR055173">
    <property type="entry name" value="NrdR-like_N"/>
</dbReference>
<dbReference type="InterPro" id="IPR003796">
    <property type="entry name" value="RNR_NrdR-like"/>
</dbReference>
<dbReference type="NCBIfam" id="TIGR00244">
    <property type="entry name" value="transcriptional regulator NrdR"/>
    <property type="match status" value="1"/>
</dbReference>
<dbReference type="PANTHER" id="PTHR30455">
    <property type="entry name" value="TRANSCRIPTIONAL REPRESSOR NRDR"/>
    <property type="match status" value="1"/>
</dbReference>
<dbReference type="PANTHER" id="PTHR30455:SF2">
    <property type="entry name" value="TRANSCRIPTIONAL REPRESSOR NRDR"/>
    <property type="match status" value="1"/>
</dbReference>
<dbReference type="Pfam" id="PF03477">
    <property type="entry name" value="ATP-cone"/>
    <property type="match status" value="1"/>
</dbReference>
<dbReference type="Pfam" id="PF22811">
    <property type="entry name" value="Zn_ribbon_NrdR"/>
    <property type="match status" value="1"/>
</dbReference>
<dbReference type="PROSITE" id="PS51161">
    <property type="entry name" value="ATP_CONE"/>
    <property type="match status" value="1"/>
</dbReference>